<keyword id="KW-0325">Glycoprotein</keyword>
<keyword id="KW-0378">Hydrolase</keyword>
<keyword id="KW-0645">Protease</keyword>
<keyword id="KW-1185">Reference proteome</keyword>
<keyword id="KW-0964">Secreted</keyword>
<keyword id="KW-0720">Serine protease</keyword>
<keyword id="KW-0732">Signal</keyword>
<keyword id="KW-0843">Virulence</keyword>
<keyword id="KW-0865">Zymogen</keyword>
<name>SUB8_ARTBC</name>
<evidence type="ECO:0000250" key="1"/>
<evidence type="ECO:0000255" key="2"/>
<evidence type="ECO:0000255" key="3">
    <source>
        <dbReference type="PROSITE-ProRule" id="PRU01240"/>
    </source>
</evidence>
<evidence type="ECO:0000305" key="4"/>
<proteinExistence type="inferred from homology"/>
<gene>
    <name type="primary">SUB8</name>
    <name type="ORF">ARB_00777</name>
</gene>
<organism>
    <name type="scientific">Arthroderma benhamiae (strain ATCC MYA-4681 / CBS 112371)</name>
    <name type="common">Trichophyton mentagrophytes</name>
    <dbReference type="NCBI Taxonomy" id="663331"/>
    <lineage>
        <taxon>Eukaryota</taxon>
        <taxon>Fungi</taxon>
        <taxon>Dikarya</taxon>
        <taxon>Ascomycota</taxon>
        <taxon>Pezizomycotina</taxon>
        <taxon>Eurotiomycetes</taxon>
        <taxon>Eurotiomycetidae</taxon>
        <taxon>Onygenales</taxon>
        <taxon>Arthrodermataceae</taxon>
        <taxon>Trichophyton</taxon>
    </lineage>
</organism>
<dbReference type="EC" id="3.4.21.-"/>
<dbReference type="EMBL" id="ABSU01000016">
    <property type="protein sequence ID" value="EFE32255.1"/>
    <property type="molecule type" value="Genomic_DNA"/>
</dbReference>
<dbReference type="RefSeq" id="XP_003012895.1">
    <property type="nucleotide sequence ID" value="XM_003012849.1"/>
</dbReference>
<dbReference type="SMR" id="D4AX50"/>
<dbReference type="GlyCosmos" id="D4AX50">
    <property type="glycosylation" value="2 sites, No reported glycans"/>
</dbReference>
<dbReference type="GeneID" id="9522973"/>
<dbReference type="KEGG" id="abe:ARB_00777"/>
<dbReference type="eggNOG" id="KOG1153">
    <property type="taxonomic scope" value="Eukaryota"/>
</dbReference>
<dbReference type="HOGENOM" id="CLU_011263_1_4_1"/>
<dbReference type="OMA" id="RHPDVDY"/>
<dbReference type="OrthoDB" id="206201at2759"/>
<dbReference type="Proteomes" id="UP000008866">
    <property type="component" value="Unassembled WGS sequence"/>
</dbReference>
<dbReference type="GO" id="GO:0005576">
    <property type="term" value="C:extracellular region"/>
    <property type="evidence" value="ECO:0007669"/>
    <property type="project" value="UniProtKB-SubCell"/>
</dbReference>
<dbReference type="GO" id="GO:0004252">
    <property type="term" value="F:serine-type endopeptidase activity"/>
    <property type="evidence" value="ECO:0007669"/>
    <property type="project" value="InterPro"/>
</dbReference>
<dbReference type="GO" id="GO:0006508">
    <property type="term" value="P:proteolysis"/>
    <property type="evidence" value="ECO:0007669"/>
    <property type="project" value="UniProtKB-KW"/>
</dbReference>
<dbReference type="CDD" id="cd04077">
    <property type="entry name" value="Peptidases_S8_PCSK9_ProteinaseK_like"/>
    <property type="match status" value="1"/>
</dbReference>
<dbReference type="FunFam" id="3.30.70.80:FF:000006">
    <property type="entry name" value="Autophagic serine protease Alp2"/>
    <property type="match status" value="1"/>
</dbReference>
<dbReference type="FunFam" id="3.40.50.200:FF:000007">
    <property type="entry name" value="Subtilisin-like serine protease"/>
    <property type="match status" value="1"/>
</dbReference>
<dbReference type="Gene3D" id="3.30.70.80">
    <property type="entry name" value="Peptidase S8 propeptide/proteinase inhibitor I9"/>
    <property type="match status" value="1"/>
</dbReference>
<dbReference type="Gene3D" id="3.40.50.200">
    <property type="entry name" value="Peptidase S8/S53 domain"/>
    <property type="match status" value="1"/>
</dbReference>
<dbReference type="InterPro" id="IPR034193">
    <property type="entry name" value="PCSK9_ProteinaseK-like"/>
</dbReference>
<dbReference type="InterPro" id="IPR000209">
    <property type="entry name" value="Peptidase_S8/S53_dom"/>
</dbReference>
<dbReference type="InterPro" id="IPR036852">
    <property type="entry name" value="Peptidase_S8/S53_dom_sf"/>
</dbReference>
<dbReference type="InterPro" id="IPR022398">
    <property type="entry name" value="Peptidase_S8_His-AS"/>
</dbReference>
<dbReference type="InterPro" id="IPR023828">
    <property type="entry name" value="Peptidase_S8_Ser-AS"/>
</dbReference>
<dbReference type="InterPro" id="IPR050131">
    <property type="entry name" value="Peptidase_S8_subtilisin-like"/>
</dbReference>
<dbReference type="InterPro" id="IPR015500">
    <property type="entry name" value="Peptidase_S8_subtilisin-rel"/>
</dbReference>
<dbReference type="InterPro" id="IPR010259">
    <property type="entry name" value="S8pro/Inhibitor_I9"/>
</dbReference>
<dbReference type="InterPro" id="IPR037045">
    <property type="entry name" value="S8pro/Inhibitor_I9_sf"/>
</dbReference>
<dbReference type="PANTHER" id="PTHR43806:SF11">
    <property type="entry name" value="CEREVISIN-RELATED"/>
    <property type="match status" value="1"/>
</dbReference>
<dbReference type="PANTHER" id="PTHR43806">
    <property type="entry name" value="PEPTIDASE S8"/>
    <property type="match status" value="1"/>
</dbReference>
<dbReference type="Pfam" id="PF05922">
    <property type="entry name" value="Inhibitor_I9"/>
    <property type="match status" value="1"/>
</dbReference>
<dbReference type="Pfam" id="PF00082">
    <property type="entry name" value="Peptidase_S8"/>
    <property type="match status" value="1"/>
</dbReference>
<dbReference type="PRINTS" id="PR00723">
    <property type="entry name" value="SUBTILISIN"/>
</dbReference>
<dbReference type="SUPFAM" id="SSF52743">
    <property type="entry name" value="Subtilisin-like"/>
    <property type="match status" value="1"/>
</dbReference>
<dbReference type="PROSITE" id="PS51892">
    <property type="entry name" value="SUBTILASE"/>
    <property type="match status" value="1"/>
</dbReference>
<dbReference type="PROSITE" id="PS00137">
    <property type="entry name" value="SUBTILASE_HIS"/>
    <property type="match status" value="1"/>
</dbReference>
<dbReference type="PROSITE" id="PS00138">
    <property type="entry name" value="SUBTILASE_SER"/>
    <property type="match status" value="1"/>
</dbReference>
<accession>D4AX50</accession>
<sequence length="490" mass="52335">MKGLLSLSVLPVLAYASPMIVDSIHQNAAPILSSTNAKDIPDSYIVVFKKGVTSTSALAHQNWVQDIHTSVESKRMKKRNQFTFKNEAFDGLKHTFDFAGGFLGYSGHFDEEVIEQVRRHPDVEYIERDSEVHTLKAATENGAPWGLARISHRDKLNFGTFNKYIYASQGGEGVDAYVIDTGTNIDHVDFEGRASWGKTIPQGDDDVDGNGHGTHCSGTIAGKKYGVAKKANVYAVKVLRTSGSGTMSDVVKGVQWAAESHLKSVGEAKKGNRKGFKGSVANMSLGGGKSVTLDRVVDQAVAVGMHFAVAAGNDNADACNYSPAGSKNSITVGASTLADERAYFSNFGKCTDIFAPGLNIQSTWIGSKHAVNTISGTSMASPHICGLLAYFLSLQPASDSAFAVAEITPAEMKDNMISIASKDLLSDIPSDTPNLLAWNGGGSDDYKKIIGGARENDTTEFSSTLTEKLEKLAEEGLTAIYNELKDAVVA</sequence>
<feature type="signal peptide" evidence="2">
    <location>
        <begin position="1"/>
        <end position="26"/>
    </location>
</feature>
<feature type="propeptide" id="PRO_0000406378" evidence="1">
    <location>
        <begin position="27"/>
        <end position="134"/>
    </location>
</feature>
<feature type="chain" id="PRO_0000406379" description="Subtilisin-like protease 8">
    <location>
        <begin position="135"/>
        <end position="490"/>
    </location>
</feature>
<feature type="domain" description="Inhibitor I9" evidence="2">
    <location>
        <begin position="43"/>
        <end position="134"/>
    </location>
</feature>
<feature type="domain" description="Peptidase S8" evidence="3">
    <location>
        <begin position="144"/>
        <end position="450"/>
    </location>
</feature>
<feature type="active site" description="Charge relay system" evidence="3">
    <location>
        <position position="180"/>
    </location>
</feature>
<feature type="active site" description="Charge relay system" evidence="3">
    <location>
        <position position="212"/>
    </location>
</feature>
<feature type="active site" description="Charge relay system" evidence="3">
    <location>
        <position position="378"/>
    </location>
</feature>
<feature type="glycosylation site" description="N-linked (GlcNAc...) asparagine" evidence="2">
    <location>
        <position position="282"/>
    </location>
</feature>
<feature type="glycosylation site" description="N-linked (GlcNAc...) asparagine" evidence="2">
    <location>
        <position position="456"/>
    </location>
</feature>
<protein>
    <recommendedName>
        <fullName>Subtilisin-like protease 8</fullName>
        <ecNumber>3.4.21.-</ecNumber>
    </recommendedName>
</protein>
<comment type="function">
    <text evidence="1">Secreted subtilisin-like serine protease with keratinolytic activity that contributes to pathogenicity.</text>
</comment>
<comment type="subcellular location">
    <subcellularLocation>
        <location evidence="1">Secreted</location>
    </subcellularLocation>
</comment>
<comment type="similarity">
    <text evidence="4">Belongs to the peptidase S8 family.</text>
</comment>
<reference key="1">
    <citation type="journal article" date="2011" name="Genome Biol.">
        <title>Comparative and functional genomics provide insights into the pathogenicity of dermatophytic fungi.</title>
        <authorList>
            <person name="Burmester A."/>
            <person name="Shelest E."/>
            <person name="Gloeckner G."/>
            <person name="Heddergott C."/>
            <person name="Schindler S."/>
            <person name="Staib P."/>
            <person name="Heidel A."/>
            <person name="Felder M."/>
            <person name="Petzold A."/>
            <person name="Szafranski K."/>
            <person name="Feuermann M."/>
            <person name="Pedruzzi I."/>
            <person name="Priebe S."/>
            <person name="Groth M."/>
            <person name="Winkler R."/>
            <person name="Li W."/>
            <person name="Kniemeyer O."/>
            <person name="Schroeckh V."/>
            <person name="Hertweck C."/>
            <person name="Hube B."/>
            <person name="White T.C."/>
            <person name="Platzer M."/>
            <person name="Guthke R."/>
            <person name="Heitman J."/>
            <person name="Woestemeyer J."/>
            <person name="Zipfel P.F."/>
            <person name="Monod M."/>
            <person name="Brakhage A.A."/>
        </authorList>
    </citation>
    <scope>NUCLEOTIDE SEQUENCE [LARGE SCALE GENOMIC DNA]</scope>
    <source>
        <strain>ATCC MYA-4681 / CBS 112371</strain>
    </source>
</reference>